<proteinExistence type="evidence at protein level"/>
<dbReference type="EC" id="1.5.1.30" evidence="1"/>
<dbReference type="EC" id="1.3.1.-" evidence="1"/>
<dbReference type="EC" id="2.6.99.-" evidence="1"/>
<dbReference type="EMBL" id="L35045">
    <property type="protein sequence ID" value="AAC37323.1"/>
    <property type="molecule type" value="mRNA"/>
</dbReference>
<dbReference type="EMBL" id="BC102269">
    <property type="protein sequence ID" value="AAI02270.1"/>
    <property type="molecule type" value="mRNA"/>
</dbReference>
<dbReference type="PIR" id="S68597">
    <property type="entry name" value="S68597"/>
</dbReference>
<dbReference type="RefSeq" id="NP_776676.1">
    <property type="nucleotide sequence ID" value="NM_174251.1"/>
</dbReference>
<dbReference type="SMR" id="P52556"/>
<dbReference type="FunCoup" id="P52556">
    <property type="interactions" value="798"/>
</dbReference>
<dbReference type="STRING" id="9913.ENSBTAP00000013889"/>
<dbReference type="PaxDb" id="9913-ENSBTAP00000013889"/>
<dbReference type="PeptideAtlas" id="P52556"/>
<dbReference type="GeneID" id="281650"/>
<dbReference type="KEGG" id="bta:281650"/>
<dbReference type="CTD" id="645"/>
<dbReference type="VEuPathDB" id="HostDB:ENSBTAG00000010508"/>
<dbReference type="eggNOG" id="ENOG502RY9R">
    <property type="taxonomic scope" value="Eukaryota"/>
</dbReference>
<dbReference type="HOGENOM" id="CLU_025711_2_0_1"/>
<dbReference type="InParanoid" id="P52556"/>
<dbReference type="OMA" id="ACKKIAI"/>
<dbReference type="OrthoDB" id="419598at2759"/>
<dbReference type="TreeFam" id="TF324063"/>
<dbReference type="Reactome" id="R-BTA-189483">
    <property type="pathway name" value="Heme degradation"/>
</dbReference>
<dbReference type="Reactome" id="R-BTA-9707564">
    <property type="pathway name" value="Cytoprotection by HMOX1"/>
</dbReference>
<dbReference type="Proteomes" id="UP000009136">
    <property type="component" value="Chromosome 18"/>
</dbReference>
<dbReference type="Bgee" id="ENSBTAG00000010508">
    <property type="expression patterns" value="Expressed in digestive system secreted substance and 106 other cell types or tissues"/>
</dbReference>
<dbReference type="GO" id="GO:0005829">
    <property type="term" value="C:cytosol"/>
    <property type="evidence" value="ECO:0000250"/>
    <property type="project" value="UniProtKB"/>
</dbReference>
<dbReference type="GO" id="GO:0004074">
    <property type="term" value="F:biliverdin reductase [NAD(P)+] activity"/>
    <property type="evidence" value="ECO:0000250"/>
    <property type="project" value="UniProtKB"/>
</dbReference>
<dbReference type="GO" id="GO:0052874">
    <property type="term" value="F:FMN reductase (NADH) activity"/>
    <property type="evidence" value="ECO:0007669"/>
    <property type="project" value="RHEA"/>
</dbReference>
<dbReference type="GO" id="GO:0052873">
    <property type="term" value="F:FMN reductase (NADPH) activity"/>
    <property type="evidence" value="ECO:0007669"/>
    <property type="project" value="RHEA"/>
</dbReference>
<dbReference type="GO" id="GO:0035605">
    <property type="term" value="F:peptidyl-cysteine S-nitrosylase activity"/>
    <property type="evidence" value="ECO:0000250"/>
    <property type="project" value="UniProtKB"/>
</dbReference>
<dbReference type="GO" id="GO:0042602">
    <property type="term" value="F:riboflavin reductase (NADPH) activity"/>
    <property type="evidence" value="ECO:0000250"/>
    <property type="project" value="UniProtKB"/>
</dbReference>
<dbReference type="GO" id="GO:0042167">
    <property type="term" value="P:heme catabolic process"/>
    <property type="evidence" value="ECO:0000250"/>
    <property type="project" value="UniProtKB"/>
</dbReference>
<dbReference type="GO" id="GO:0030219">
    <property type="term" value="P:megakaryocyte differentiation"/>
    <property type="evidence" value="ECO:0000250"/>
    <property type="project" value="UniProtKB"/>
</dbReference>
<dbReference type="GO" id="GO:0046627">
    <property type="term" value="P:negative regulation of insulin receptor signaling pathway"/>
    <property type="evidence" value="ECO:0000250"/>
    <property type="project" value="UniProtKB"/>
</dbReference>
<dbReference type="CDD" id="cd05244">
    <property type="entry name" value="BVR-B_like_SDR_a"/>
    <property type="match status" value="1"/>
</dbReference>
<dbReference type="FunFam" id="3.40.50.720:FF:000369">
    <property type="entry name" value="flavin reductase (NADPH)"/>
    <property type="match status" value="1"/>
</dbReference>
<dbReference type="Gene3D" id="3.40.50.720">
    <property type="entry name" value="NAD(P)-binding Rossmann-like Domain"/>
    <property type="match status" value="1"/>
</dbReference>
<dbReference type="InterPro" id="IPR016040">
    <property type="entry name" value="NAD(P)-bd_dom"/>
</dbReference>
<dbReference type="InterPro" id="IPR036291">
    <property type="entry name" value="NAD(P)-bd_dom_sf"/>
</dbReference>
<dbReference type="InterPro" id="IPR051606">
    <property type="entry name" value="Polyketide_Oxido-like"/>
</dbReference>
<dbReference type="PANTHER" id="PTHR43355">
    <property type="entry name" value="FLAVIN REDUCTASE (NADPH)"/>
    <property type="match status" value="1"/>
</dbReference>
<dbReference type="PANTHER" id="PTHR43355:SF2">
    <property type="entry name" value="FLAVIN REDUCTASE (NADPH)"/>
    <property type="match status" value="1"/>
</dbReference>
<dbReference type="Pfam" id="PF13460">
    <property type="entry name" value="NAD_binding_10"/>
    <property type="match status" value="1"/>
</dbReference>
<dbReference type="SUPFAM" id="SSF51735">
    <property type="entry name" value="NAD(P)-binding Rossmann-fold domains"/>
    <property type="match status" value="1"/>
</dbReference>
<gene>
    <name type="primary">BLVRB</name>
    <name evidence="1" type="synonym">SCAN</name>
</gene>
<organism>
    <name type="scientific">Bos taurus</name>
    <name type="common">Bovine</name>
    <dbReference type="NCBI Taxonomy" id="9913"/>
    <lineage>
        <taxon>Eukaryota</taxon>
        <taxon>Metazoa</taxon>
        <taxon>Chordata</taxon>
        <taxon>Craniata</taxon>
        <taxon>Vertebrata</taxon>
        <taxon>Euteleostomi</taxon>
        <taxon>Mammalia</taxon>
        <taxon>Eutheria</taxon>
        <taxon>Laurasiatheria</taxon>
        <taxon>Artiodactyla</taxon>
        <taxon>Ruminantia</taxon>
        <taxon>Pecora</taxon>
        <taxon>Bovidae</taxon>
        <taxon>Bovinae</taxon>
        <taxon>Bos</taxon>
    </lineage>
</organism>
<protein>
    <recommendedName>
        <fullName>Flavin reductase (NADPH)</fullName>
        <shortName>FR</shortName>
        <ecNumber evidence="1">1.5.1.30</ecNumber>
    </recommendedName>
    <alternativeName>
        <fullName>Biliverdin reductase B</fullName>
        <shortName>BVR-B</shortName>
    </alternativeName>
    <alternativeName>
        <fullName>Biliverdin-IX beta-reductase</fullName>
        <ecNumber evidence="1">1.3.1.-</ecNumber>
    </alternativeName>
    <alternativeName>
        <fullName>Green heme-binding protein</fullName>
        <shortName>GHBP</shortName>
    </alternativeName>
    <alternativeName>
        <fullName>NADPH-dependent diaphorase</fullName>
    </alternativeName>
    <alternativeName>
        <fullName>NADPH-flavin reductase</fullName>
        <shortName>FLR</shortName>
    </alternativeName>
    <alternativeName>
        <fullName evidence="1">S-nitroso-CoA-assisted nitrosyltransferase</fullName>
        <shortName evidence="1">SNO-CoA-assisted nitrosyltransferase</shortName>
        <ecNumber evidence="1">2.6.99.-</ecNumber>
    </alternativeName>
</protein>
<comment type="function">
    <text evidence="1">Enzyme that can both act as a NAD(P)H-dependent reductase and a S-nitroso-CoA-dependent nitrosyltransferase. Promotes fetal heme degradation during development. Also expressed in adult tissues, where it acts as a regulator of hematopoiesis, intermediary metabolism (glutaminolysis, glycolysis, TCA cycle and pentose phosphate pathway) and insulin signaling. Has a broad specificity oxidoreductase activity by catalyzing the NAD(P)H-dependent reduction of a variety of flavins, such as riboflavin, FAD or FMN, biliverdins, methemoglobin and PQQ (pyrroloquinoline quinone). Contributes to fetal heme catabolism by catalyzing reduction of biliverdin IXbeta into bilirubin IXbeta in the liver. Biliverdin IXbeta, which constitutes the major heme catabolite in the fetus is not present in adult. Does not reduce bilirubin IXalpha. Can also reduce the complexed Fe(3+) iron to Fe(2+) in the presence of FMN and NADPH. Acts as a protein nitrosyltransferase by catalyzing nitrosylation of cysteine residues of target proteins, such as HMOX2, INSR and IRS1. S-nitroso-CoA-dependent nitrosyltransferase activity is mediated via a 'ping-pong' mechanism: BLVRB first associates with both S-nitroso-CoA and protein substrate, nitric oxide group is then transferred from S-nitroso-CoA to Cys-109 and Cys-188 residues of BLVRB and from S-nitroso-BLVRB to the protein substrate. Inhibits insulin signaling by mediating nitrosylation of INSR and IRS1, leading to their inhibition.</text>
</comment>
<comment type="catalytic activity">
    <reaction evidence="1">
        <text>reduced riboflavin + NADP(+) = riboflavin + NADPH + 2 H(+)</text>
        <dbReference type="Rhea" id="RHEA:19377"/>
        <dbReference type="ChEBI" id="CHEBI:15378"/>
        <dbReference type="ChEBI" id="CHEBI:17607"/>
        <dbReference type="ChEBI" id="CHEBI:57783"/>
        <dbReference type="ChEBI" id="CHEBI:57986"/>
        <dbReference type="ChEBI" id="CHEBI:58349"/>
        <dbReference type="EC" id="1.5.1.30"/>
    </reaction>
    <physiologicalReaction direction="right-to-left" evidence="1">
        <dbReference type="Rhea" id="RHEA:19379"/>
    </physiologicalReaction>
</comment>
<comment type="catalytic activity">
    <reaction evidence="1">
        <text>bilirubin IXbeta + NADP(+) = biliverdin IXbeta + NADPH + H(+)</text>
        <dbReference type="Rhea" id="RHEA:78395"/>
        <dbReference type="ChEBI" id="CHEBI:15378"/>
        <dbReference type="ChEBI" id="CHEBI:57783"/>
        <dbReference type="ChEBI" id="CHEBI:58349"/>
        <dbReference type="ChEBI" id="CHEBI:136509"/>
        <dbReference type="ChEBI" id="CHEBI:228295"/>
    </reaction>
    <physiologicalReaction direction="right-to-left" evidence="1">
        <dbReference type="Rhea" id="RHEA:78397"/>
    </physiologicalReaction>
</comment>
<comment type="catalytic activity">
    <reaction evidence="1">
        <text>FMNH2 + NAD(+) = FMN + NADH + 2 H(+)</text>
        <dbReference type="Rhea" id="RHEA:21620"/>
        <dbReference type="ChEBI" id="CHEBI:15378"/>
        <dbReference type="ChEBI" id="CHEBI:57540"/>
        <dbReference type="ChEBI" id="CHEBI:57618"/>
        <dbReference type="ChEBI" id="CHEBI:57945"/>
        <dbReference type="ChEBI" id="CHEBI:58210"/>
    </reaction>
    <physiologicalReaction direction="right-to-left" evidence="1">
        <dbReference type="Rhea" id="RHEA:21622"/>
    </physiologicalReaction>
</comment>
<comment type="catalytic activity">
    <reaction evidence="1">
        <text>FMNH2 + NADP(+) = FMN + NADPH + 2 H(+)</text>
        <dbReference type="Rhea" id="RHEA:21624"/>
        <dbReference type="ChEBI" id="CHEBI:15378"/>
        <dbReference type="ChEBI" id="CHEBI:57618"/>
        <dbReference type="ChEBI" id="CHEBI:57783"/>
        <dbReference type="ChEBI" id="CHEBI:58210"/>
        <dbReference type="ChEBI" id="CHEBI:58349"/>
    </reaction>
    <physiologicalReaction direction="right-to-left" evidence="1">
        <dbReference type="Rhea" id="RHEA:21626"/>
    </physiologicalReaction>
</comment>
<comment type="catalytic activity">
    <reaction evidence="1">
        <text>S-nitroso-CoA + L-cysteinyl-[protein] = S-nitroso-L-cysteinyl-[protein] + CoA</text>
        <dbReference type="Rhea" id="RHEA:78379"/>
        <dbReference type="Rhea" id="RHEA-COMP:10131"/>
        <dbReference type="Rhea" id="RHEA-COMP:17091"/>
        <dbReference type="ChEBI" id="CHEBI:29950"/>
        <dbReference type="ChEBI" id="CHEBI:57287"/>
        <dbReference type="ChEBI" id="CHEBI:145546"/>
        <dbReference type="ChEBI" id="CHEBI:149494"/>
    </reaction>
    <physiologicalReaction direction="left-to-right" evidence="1">
        <dbReference type="Rhea" id="RHEA:78380"/>
    </physiologicalReaction>
</comment>
<comment type="catalytic activity">
    <reaction evidence="1">
        <text>L-cysteinyl-[SCAN] + S-nitroso-CoA = S-nitroso-L-cysteinyl-[SCAN] + CoA</text>
        <dbReference type="Rhea" id="RHEA:78383"/>
        <dbReference type="Rhea" id="RHEA-COMP:19068"/>
        <dbReference type="Rhea" id="RHEA-COMP:19069"/>
        <dbReference type="ChEBI" id="CHEBI:29950"/>
        <dbReference type="ChEBI" id="CHEBI:57287"/>
        <dbReference type="ChEBI" id="CHEBI:145546"/>
        <dbReference type="ChEBI" id="CHEBI:149494"/>
    </reaction>
    <physiologicalReaction direction="left-to-right" evidence="1">
        <dbReference type="Rhea" id="RHEA:78384"/>
    </physiologicalReaction>
</comment>
<comment type="catalytic activity">
    <reaction evidence="1">
        <text>S-nitroso-L-cysteinyl-[SCAN] + L-cysteinyl-[protein] = L-cysteinyl-[SCAN] + S-nitroso-L-cysteinyl-[protein]</text>
        <dbReference type="Rhea" id="RHEA:78387"/>
        <dbReference type="Rhea" id="RHEA-COMP:10131"/>
        <dbReference type="Rhea" id="RHEA-COMP:17091"/>
        <dbReference type="Rhea" id="RHEA-COMP:19068"/>
        <dbReference type="Rhea" id="RHEA-COMP:19069"/>
        <dbReference type="ChEBI" id="CHEBI:29950"/>
        <dbReference type="ChEBI" id="CHEBI:149494"/>
    </reaction>
    <physiologicalReaction direction="left-to-right" evidence="1">
        <dbReference type="Rhea" id="RHEA:78388"/>
    </physiologicalReaction>
</comment>
<comment type="subunit">
    <text evidence="1">Monomer.</text>
</comment>
<comment type="subcellular location">
    <subcellularLocation>
        <location evidence="1">Cytoplasm</location>
    </subcellularLocation>
</comment>
<comment type="tissue specificity">
    <text>At least expressed in the liver and erythrocyte.</text>
</comment>
<comment type="mass spectrometry"/>
<comment type="similarity">
    <text evidence="4">Belongs to the BLVRB family.</text>
</comment>
<accession>P52556</accession>
<accession>Q3T0T4</accession>
<evidence type="ECO:0000250" key="1">
    <source>
        <dbReference type="UniProtKB" id="P30043"/>
    </source>
</evidence>
<evidence type="ECO:0000269" key="2">
    <source>
    </source>
</evidence>
<evidence type="ECO:0000269" key="3">
    <source>
    </source>
</evidence>
<evidence type="ECO:0000305" key="4"/>
<reference key="1">
    <citation type="journal article" date="1994" name="Proc. Natl. Acad. Sci. U.S.A.">
        <title>Flavin reductase: sequence of cDNA from bovine liver and tissue distribution.</title>
        <authorList>
            <person name="Quandt K.S."/>
            <person name="Hultquist D.E."/>
        </authorList>
    </citation>
    <scope>NUCLEOTIDE SEQUENCE [MRNA]</scope>
    <scope>PROTEIN SEQUENCE OF 37-58 AND 118-127</scope>
    <scope>MASS SPECTROMETRY</scope>
    <source>
        <tissue>Liver</tissue>
    </source>
</reference>
<reference key="2">
    <citation type="submission" date="2005-08" db="EMBL/GenBank/DDBJ databases">
        <authorList>
            <consortium name="NIH - Mammalian Gene Collection (MGC) project"/>
        </authorList>
    </citation>
    <scope>NUCLEOTIDE SEQUENCE [LARGE SCALE MRNA]</scope>
    <source>
        <strain>Crossbred X Angus</strain>
        <tissue>Ileum</tissue>
    </source>
</reference>
<reference key="3">
    <citation type="journal article" date="1991" name="Biochem. Biophys. Res. Commun.">
        <title>Evidence that the protein components of bovine erythrocyte green heme binding protein and flavin reductase are identical.</title>
        <authorList>
            <person name="Quandt K.S."/>
            <person name="Xu F."/>
            <person name="Chen P."/>
            <person name="Hultquist D.E."/>
        </authorList>
    </citation>
    <scope>PROTEIN SEQUENCE OF 2-37; 121-137 AND 146-169</scope>
    <source>
        <tissue>Erythrocyte</tissue>
    </source>
</reference>
<feature type="initiator methionine" description="Removed" evidence="2">
    <location>
        <position position="1"/>
    </location>
</feature>
<feature type="chain" id="PRO_0000064947" description="Flavin reductase (NADPH)">
    <location>
        <begin position="2"/>
        <end position="206"/>
    </location>
</feature>
<feature type="active site" description="S-nitroso-cysteine intermediate; for S-nitroso-CoA-dependent nitrosyltransferase activity" evidence="1">
    <location>
        <position position="109"/>
    </location>
</feature>
<feature type="active site" description="S-nitroso-cysteine intermediate; for S-nitroso-CoA-dependent nitrosyltransferase activity" evidence="1">
    <location>
        <position position="188"/>
    </location>
</feature>
<feature type="binding site" evidence="1">
    <location>
        <position position="10"/>
    </location>
    <ligand>
        <name>NADP(+)</name>
        <dbReference type="ChEBI" id="CHEBI:58349"/>
    </ligand>
</feature>
<feature type="binding site" evidence="1">
    <location>
        <position position="12"/>
    </location>
    <ligand>
        <name>NADP(+)</name>
        <dbReference type="ChEBI" id="CHEBI:58349"/>
    </ligand>
</feature>
<feature type="binding site" evidence="1">
    <location>
        <position position="13"/>
    </location>
    <ligand>
        <name>NADP(+)</name>
        <dbReference type="ChEBI" id="CHEBI:58349"/>
    </ligand>
</feature>
<feature type="binding site" evidence="1">
    <location>
        <position position="14"/>
    </location>
    <ligand>
        <name>NADP(+)</name>
        <dbReference type="ChEBI" id="CHEBI:58349"/>
    </ligand>
</feature>
<feature type="binding site" evidence="1">
    <location>
        <position position="15"/>
    </location>
    <ligand>
        <name>NADP(+)</name>
        <dbReference type="ChEBI" id="CHEBI:58349"/>
    </ligand>
</feature>
<feature type="binding site" evidence="1">
    <location>
        <position position="35"/>
    </location>
    <ligand>
        <name>NADP(+)</name>
        <dbReference type="ChEBI" id="CHEBI:58349"/>
    </ligand>
</feature>
<feature type="binding site" evidence="1">
    <location>
        <position position="38"/>
    </location>
    <ligand>
        <name>NADP(+)</name>
        <dbReference type="ChEBI" id="CHEBI:58349"/>
    </ligand>
</feature>
<feature type="binding site" evidence="1">
    <location>
        <position position="39"/>
    </location>
    <ligand>
        <name>NADP(+)</name>
        <dbReference type="ChEBI" id="CHEBI:58349"/>
    </ligand>
</feature>
<feature type="binding site" evidence="1">
    <location>
        <position position="54"/>
    </location>
    <ligand>
        <name>NADP(+)</name>
        <dbReference type="ChEBI" id="CHEBI:58349"/>
    </ligand>
</feature>
<feature type="binding site" evidence="1">
    <location>
        <position position="55"/>
    </location>
    <ligand>
        <name>NADP(+)</name>
        <dbReference type="ChEBI" id="CHEBI:58349"/>
    </ligand>
</feature>
<feature type="binding site" evidence="1">
    <location>
        <position position="75"/>
    </location>
    <ligand>
        <name>NADP(+)</name>
        <dbReference type="ChEBI" id="CHEBI:58349"/>
    </ligand>
</feature>
<feature type="binding site" evidence="1">
    <location>
        <position position="76"/>
    </location>
    <ligand>
        <name>NADP(+)</name>
        <dbReference type="ChEBI" id="CHEBI:58349"/>
    </ligand>
</feature>
<feature type="binding site" evidence="1">
    <location>
        <position position="78"/>
    </location>
    <ligand>
        <name>NADP(+)</name>
        <dbReference type="ChEBI" id="CHEBI:58349"/>
    </ligand>
</feature>
<feature type="binding site" evidence="1">
    <location>
        <position position="87"/>
    </location>
    <ligand>
        <name>NADP(+)</name>
        <dbReference type="ChEBI" id="CHEBI:58349"/>
    </ligand>
</feature>
<feature type="binding site" evidence="1">
    <location>
        <position position="109"/>
    </location>
    <ligand>
        <name>NADP(+)</name>
        <dbReference type="ChEBI" id="CHEBI:58349"/>
    </ligand>
</feature>
<feature type="binding site" evidence="1">
    <location>
        <position position="132"/>
    </location>
    <ligand>
        <name>NADP(+)</name>
        <dbReference type="ChEBI" id="CHEBI:58349"/>
    </ligand>
</feature>
<feature type="binding site" evidence="1">
    <location>
        <position position="153"/>
    </location>
    <ligand>
        <name>NADP(+)</name>
        <dbReference type="ChEBI" id="CHEBI:58349"/>
    </ligand>
</feature>
<feature type="binding site" evidence="1">
    <location>
        <position position="154"/>
    </location>
    <ligand>
        <name>NADP(+)</name>
        <dbReference type="ChEBI" id="CHEBI:58349"/>
    </ligand>
</feature>
<feature type="modified residue" description="Phosphoserine" evidence="1">
    <location>
        <position position="42"/>
    </location>
</feature>
<feature type="modified residue" description="Phosphoserine" evidence="1">
    <location>
        <position position="82"/>
    </location>
</feature>
<keyword id="KW-0963">Cytoplasm</keyword>
<keyword id="KW-0903">Direct protein sequencing</keyword>
<keyword id="KW-0521">NADP</keyword>
<keyword id="KW-0560">Oxidoreductase</keyword>
<keyword id="KW-0597">Phosphoprotein</keyword>
<keyword id="KW-1185">Reference proteome</keyword>
<keyword id="KW-0808">Transferase</keyword>
<name>BLVRB_BOVIN</name>
<sequence>MVVKKIALFGATGNTGLTTLAQAVQAGYEVTVLVRDPSRLPSEGPQPAHVVVGDVRQPADVDKTVAGQDAVIVLLGTRNDLSPTTVMSEGAQNIVAAMKAHGVDKVVACTSAFLLWDPSKVPPRLQDVTDDHIRMHKVLQQSGLKYVAVMPPHIGDHPLTGAYTVTLDGRGPSRVISKHDLGHFMLHCLTTDKYDGHTTYPSHVYE</sequence>